<proteinExistence type="inferred from homology"/>
<keyword id="KW-0066">ATP synthesis</keyword>
<keyword id="KW-0138">CF(0)</keyword>
<keyword id="KW-0375">Hydrogen ion transport</keyword>
<keyword id="KW-0406">Ion transport</keyword>
<keyword id="KW-0472">Membrane</keyword>
<keyword id="KW-0496">Mitochondrion</keyword>
<keyword id="KW-1185">Reference proteome</keyword>
<keyword id="KW-0812">Transmembrane</keyword>
<keyword id="KW-1133">Transmembrane helix</keyword>
<keyword id="KW-0813">Transport</keyword>
<organism>
    <name type="scientific">Triticum aestivum</name>
    <name type="common">Wheat</name>
    <dbReference type="NCBI Taxonomy" id="4565"/>
    <lineage>
        <taxon>Eukaryota</taxon>
        <taxon>Viridiplantae</taxon>
        <taxon>Streptophyta</taxon>
        <taxon>Embryophyta</taxon>
        <taxon>Tracheophyta</taxon>
        <taxon>Spermatophyta</taxon>
        <taxon>Magnoliopsida</taxon>
        <taxon>Liliopsida</taxon>
        <taxon>Poales</taxon>
        <taxon>Poaceae</taxon>
        <taxon>BOP clade</taxon>
        <taxon>Pooideae</taxon>
        <taxon>Triticodae</taxon>
        <taxon>Triticeae</taxon>
        <taxon>Triticinae</taxon>
        <taxon>Triticum</taxon>
    </lineage>
</organism>
<protein>
    <recommendedName>
        <fullName>ATP synthase protein MI25</fullName>
    </recommendedName>
    <alternativeName>
        <fullName>ORF25</fullName>
    </alternativeName>
</protein>
<sequence>MRFLSTDMKDRNMLFAAIPSICASSPKKISIYNEEMIVARCFIGFLIFSRKSLGKTFKETLDGRIESIQEELLQFFNPNEVIPEESNEQQRLLRISLRICSTVVESLPTARCAPKCEKTVQALLCRNLNVKSATLLNATSSRRIRLQDDIVTGFHFSVSERFVSGSTFKASTIDLIREGLIVLRKVRVGGSI</sequence>
<geneLocation type="mitochondrion"/>
<feature type="chain" id="PRO_0000096478" description="ATP synthase protein MI25">
    <location>
        <begin position="1"/>
        <end position="192"/>
    </location>
</feature>
<feature type="transmembrane region" description="Helical" evidence="2">
    <location>
        <begin position="29"/>
        <end position="49"/>
    </location>
</feature>
<name>MI25_WHEAT</name>
<comment type="function">
    <text evidence="1">This is one of the chains of the nonenzymatic component (CF(0) subunit) of the mitochondrial ATPase complex.</text>
</comment>
<comment type="subunit">
    <text evidence="1">F-type ATPases have 2 components, CF(1) - the catalytic core - and CF(0) - the membrane proton channel. CF(1) has five subunits: alpha(3), beta(3), gamma(1), delta(1), epsilon(1). CF(0) has three main subunits: a, b and c (By similarity).</text>
</comment>
<comment type="subcellular location">
    <subcellularLocation>
        <location evidence="1">Mitochondrion membrane</location>
        <topology evidence="1">Single-pass membrane protein</topology>
    </subcellularLocation>
</comment>
<comment type="similarity">
    <text evidence="3">Belongs to the ATPase protein MI25 family.</text>
</comment>
<evidence type="ECO:0000250" key="1"/>
<evidence type="ECO:0000255" key="2"/>
<evidence type="ECO:0000305" key="3"/>
<reference key="1">
    <citation type="journal article" date="1990" name="Plant Mol. Biol.">
        <title>Characterization of the wheat mitochondrial orf25 gene.</title>
        <authorList>
            <person name="Bonen L."/>
            <person name="Bird S."/>
            <person name="Belanger L."/>
        </authorList>
    </citation>
    <scope>NUCLEOTIDE SEQUENCE [GENOMIC DNA]</scope>
</reference>
<dbReference type="EMBL" id="X54311">
    <property type="protein sequence ID" value="CAA38209.1"/>
    <property type="molecule type" value="Genomic_DNA"/>
</dbReference>
<dbReference type="PIR" id="S12314">
    <property type="entry name" value="S12314"/>
</dbReference>
<dbReference type="RefSeq" id="XP_044375998.1">
    <property type="nucleotide sequence ID" value="XM_044520063.1"/>
</dbReference>
<dbReference type="RefSeq" id="XP_044376499.1">
    <property type="nucleotide sequence ID" value="XM_044520564.1"/>
</dbReference>
<dbReference type="RefSeq" id="XP_044376500.1">
    <property type="nucleotide sequence ID" value="XM_044520565.1"/>
</dbReference>
<dbReference type="RefSeq" id="XP_044425232.1">
    <property type="nucleotide sequence ID" value="XM_044569297.1"/>
</dbReference>
<dbReference type="RefSeq" id="YP_009433724.1">
    <property type="nucleotide sequence ID" value="NC_036024.1"/>
</dbReference>
<dbReference type="RefSeq" id="YP_398412.1">
    <property type="nucleotide sequence ID" value="NC_007579.1"/>
</dbReference>
<dbReference type="SMR" id="P68538"/>
<dbReference type="PaxDb" id="4565-EPlTAEP00000010089"/>
<dbReference type="EnsemblPlants" id="TraesARI4D03G02560840.1">
    <property type="protein sequence ID" value="TraesARI4D03G02560840.1.CDS1"/>
    <property type="gene ID" value="TraesARI4D03G02560840"/>
</dbReference>
<dbReference type="EnsemblPlants" id="TraesCS4D02G236200.1">
    <property type="protein sequence ID" value="TraesCS4D02G236200.1.cds1"/>
    <property type="gene ID" value="TraesCS4D02G236200"/>
</dbReference>
<dbReference type="EnsemblPlants" id="TraesCS4D03G0570500.1">
    <property type="protein sequence ID" value="TraesCS4D03G0570500.1.CDS1"/>
    <property type="gene ID" value="TraesCS4D03G0570500"/>
</dbReference>
<dbReference type="EnsemblPlants" id="TraesCS7A03G1280200.1">
    <property type="protein sequence ID" value="TraesCS7A03G1280200.1.CDS1"/>
    <property type="gene ID" value="TraesCS7A03G1280200"/>
</dbReference>
<dbReference type="EnsemblPlants" id="TraesJAG4D03G02518400.1">
    <property type="protein sequence ID" value="TraesJAG4D03G02518400.1.CDS1"/>
    <property type="gene ID" value="TraesJAG4D03G02518400"/>
</dbReference>
<dbReference type="EnsemblPlants" id="TraesJAG7D03G04379980.1">
    <property type="protein sequence ID" value="TraesJAG7D03G04379980.1.CDS1"/>
    <property type="gene ID" value="TraesJAG7D03G04379980"/>
</dbReference>
<dbReference type="EnsemblPlants" id="TraesJUL6A03G03392270.1">
    <property type="protein sequence ID" value="TraesJUL6A03G03392270.1.CDS1"/>
    <property type="gene ID" value="TraesJUL6A03G03392270"/>
</dbReference>
<dbReference type="EnsemblPlants" id="TraesKAR4D01G0286050.1">
    <property type="protein sequence ID" value="cds.TraesKAR4D01G0286050.1"/>
    <property type="gene ID" value="TraesKAR4D01G0286050"/>
</dbReference>
<dbReference type="EnsemblPlants" id="TraesKAR4D01G0324850.1">
    <property type="protein sequence ID" value="cds.TraesKAR4D01G0324850.1"/>
    <property type="gene ID" value="TraesKAR4D01G0324850"/>
</dbReference>
<dbReference type="EnsemblPlants" id="TraesKAR4D01G0324860.1">
    <property type="protein sequence ID" value="cds.TraesKAR4D01G0324860.1"/>
    <property type="gene ID" value="TraesKAR4D01G0324860"/>
</dbReference>
<dbReference type="EnsemblPlants" id="TraesKARUn01G0024310.1">
    <property type="protein sequence ID" value="cds.TraesKARUn01G0024310.1"/>
    <property type="gene ID" value="TraesKARUn01G0024310"/>
</dbReference>
<dbReference type="EnsemblPlants" id="TraesKARUn01G0027450.1">
    <property type="protein sequence ID" value="cds.TraesKARUn01G0027450.1"/>
    <property type="gene ID" value="TraesKARUn01G0027450"/>
</dbReference>
<dbReference type="EnsemblPlants" id="TraesKARUn01G0099530.1">
    <property type="protein sequence ID" value="cds.TraesKARUn01G0099530.1"/>
    <property type="gene ID" value="TraesKARUn01G0099530"/>
</dbReference>
<dbReference type="EnsemblPlants" id="TraesKARUn01G0105530.1">
    <property type="protein sequence ID" value="cds.TraesKARUn01G0105530.1"/>
    <property type="gene ID" value="TraesKARUn01G0105530"/>
</dbReference>
<dbReference type="EnsemblPlants" id="TraesKARUn01G0110220.1">
    <property type="protein sequence ID" value="cds.TraesKARUn01G0110220.1"/>
    <property type="gene ID" value="TraesKARUn01G0110220"/>
</dbReference>
<dbReference type="EnsemblPlants" id="TraesKARUn01G0117090.1">
    <property type="protein sequence ID" value="cds.TraesKARUn01G0117090.1"/>
    <property type="gene ID" value="TraesKARUn01G0117090"/>
</dbReference>
<dbReference type="EnsemblPlants" id="TraesKARUn01G0122030.1">
    <property type="protein sequence ID" value="cds.TraesKARUn01G0122030.1"/>
    <property type="gene ID" value="TraesKARUn01G0122030"/>
</dbReference>
<dbReference type="EnsemblPlants" id="TraesKARUn01G0124250.1">
    <property type="protein sequence ID" value="cds.TraesKARUn01G0124250.1"/>
    <property type="gene ID" value="TraesKARUn01G0124250"/>
</dbReference>
<dbReference type="EnsemblPlants" id="TraesKARUn01G0132790.1">
    <property type="protein sequence ID" value="cds.TraesKARUn01G0132790.1"/>
    <property type="gene ID" value="TraesKARUn01G0132790"/>
</dbReference>
<dbReference type="EnsemblPlants" id="TraesKARUn01G0132980.1">
    <property type="protein sequence ID" value="cds.TraesKARUn01G0132980.1"/>
    <property type="gene ID" value="TraesKARUn01G0132980"/>
</dbReference>
<dbReference type="EnsemblPlants" id="TraesKARUn01G0137030.1">
    <property type="protein sequence ID" value="cds.TraesKARUn01G0137030.1"/>
    <property type="gene ID" value="TraesKARUn01G0137030"/>
</dbReference>
<dbReference type="EnsemblPlants" id="TraesKARUn01G0140600.1">
    <property type="protein sequence ID" value="cds.TraesKARUn01G0140600.1"/>
    <property type="gene ID" value="TraesKARUn01G0140600"/>
</dbReference>
<dbReference type="EnsemblPlants" id="TraesKARUn01G0144060.1">
    <property type="protein sequence ID" value="cds.TraesKARUn01G0144060.1"/>
    <property type="gene ID" value="TraesKARUn01G0144060"/>
</dbReference>
<dbReference type="EnsemblPlants" id="TraesKARUn01G0151410.1">
    <property type="protein sequence ID" value="cds.TraesKARUn01G0151410.1"/>
    <property type="gene ID" value="TraesKARUn01G0151410"/>
</dbReference>
<dbReference type="EnsemblPlants" id="TraesKARUn01G0152330.1">
    <property type="protein sequence ID" value="cds.TraesKARUn01G0152330.1"/>
    <property type="gene ID" value="TraesKARUn01G0152330"/>
</dbReference>
<dbReference type="EnsemblPlants" id="TraesKARUn01G0153480.1">
    <property type="protein sequence ID" value="cds.TraesKARUn01G0153480.1"/>
    <property type="gene ID" value="TraesKARUn01G0153480"/>
</dbReference>
<dbReference type="EnsemblPlants" id="TraesKARUn01G0158400.1">
    <property type="protein sequence ID" value="cds.TraesKARUn01G0158400.1"/>
    <property type="gene ID" value="TraesKARUn01G0158400"/>
</dbReference>
<dbReference type="EnsemblPlants" id="TraesLAC4D03G02474700.1">
    <property type="protein sequence ID" value="TraesLAC4D03G02474700.1.CDS1"/>
    <property type="gene ID" value="TraesLAC4D03G02474700"/>
</dbReference>
<dbReference type="EnsemblPlants" id="TraesLAC4D03G02491210.1">
    <property type="protein sequence ID" value="TraesLAC4D03G02491210.1.CDS1"/>
    <property type="gene ID" value="TraesLAC4D03G02491210"/>
</dbReference>
<dbReference type="EnsemblPlants" id="TraesLAC4D03G02491220.1">
    <property type="protein sequence ID" value="TraesLAC4D03G02491220.1.CDS1"/>
    <property type="gene ID" value="TraesLAC4D03G02491220"/>
</dbReference>
<dbReference type="EnsemblPlants" id="TraesLDM1B03G00405030.1">
    <property type="protein sequence ID" value="TraesLDM1B03G00405030.1.CDS1"/>
    <property type="gene ID" value="TraesLDM1B03G00405030"/>
</dbReference>
<dbReference type="EnsemblPlants" id="TraesLDM1B03G00405040.1">
    <property type="protein sequence ID" value="TraesLDM1B03G00405040.1.CDS1"/>
    <property type="gene ID" value="TraesLDM1B03G00405040"/>
</dbReference>
<dbReference type="EnsemblPlants" id="TraesLDM4D03G02540070.1">
    <property type="protein sequence ID" value="TraesLDM4D03G02540070.1.CDS1"/>
    <property type="gene ID" value="TraesLDM4D03G02540070"/>
</dbReference>
<dbReference type="EnsemblPlants" id="TraesLDM4D03G02540080.1">
    <property type="protein sequence ID" value="TraesLDM4D03G02540080.1.CDS1"/>
    <property type="gene ID" value="TraesLDM4D03G02540080"/>
</dbReference>
<dbReference type="EnsemblPlants" id="TraesLDM6A03G03369020.1">
    <property type="protein sequence ID" value="TraesLDM6A03G03369020.1.CDS1"/>
    <property type="gene ID" value="TraesLDM6A03G03369020"/>
</dbReference>
<dbReference type="EnsemblPlants" id="TraesMAC4D03G02535710.1">
    <property type="protein sequence ID" value="TraesMAC4D03G02535710.1.CDS1"/>
    <property type="gene ID" value="TraesMAC4D03G02535710"/>
</dbReference>
<dbReference type="EnsemblPlants" id="TraesNOR4D03G02538400.1">
    <property type="protein sequence ID" value="TraesNOR4D03G02538400.1.CDS1"/>
    <property type="gene ID" value="TraesNOR4D03G02538400"/>
</dbReference>
<dbReference type="EnsemblPlants" id="TraesNOR4D03G02554960.1">
    <property type="protein sequence ID" value="TraesNOR4D03G02554960.1.CDS1"/>
    <property type="gene ID" value="TraesNOR4D03G02554960"/>
</dbReference>
<dbReference type="EnsemblPlants" id="TraesPARA_EIv1.0_1469220.1">
    <property type="protein sequence ID" value="TraesPARA_EIv1.0_1469220.1.CDS1"/>
    <property type="gene ID" value="TraesPARA_EIv1.0_1469220"/>
</dbReference>
<dbReference type="EnsemblPlants" id="TraesPARA_EIv1.0_1478990.1">
    <property type="protein sequence ID" value="TraesPARA_EIv1.0_1478990.1.CDS1"/>
    <property type="gene ID" value="TraesPARA_EIv1.0_1478990"/>
</dbReference>
<dbReference type="EnsemblPlants" id="TraesPARA_EIv1.0_1479000.1">
    <property type="protein sequence ID" value="TraesPARA_EIv1.0_1479000.1.CDS1"/>
    <property type="gene ID" value="TraesPARA_EIv1.0_1479000"/>
</dbReference>
<dbReference type="EnsemblPlants" id="TraesPARA_EIv1.0_2673930.1">
    <property type="protein sequence ID" value="TraesPARA_EIv1.0_2673930.1.CDS1"/>
    <property type="gene ID" value="TraesPARA_EIv1.0_2673930"/>
</dbReference>
<dbReference type="EnsemblPlants" id="TraesPARA_EIv1.0_2676060.1">
    <property type="protein sequence ID" value="TraesPARA_EIv1.0_2676060.1.CDS1"/>
    <property type="gene ID" value="TraesPARA_EIv1.0_2676060"/>
</dbReference>
<dbReference type="EnsemblPlants" id="TraesPARA_EIv1.0_2678610.1">
    <property type="protein sequence ID" value="TraesPARA_EIv1.0_2678610.1.CDS1"/>
    <property type="gene ID" value="TraesPARA_EIv1.0_2678610"/>
</dbReference>
<dbReference type="EnsemblPlants" id="TraesPARA_EIv1.0_2682430.1">
    <property type="protein sequence ID" value="TraesPARA_EIv1.0_2682430.1.CDS1"/>
    <property type="gene ID" value="TraesPARA_EIv1.0_2682430"/>
</dbReference>
<dbReference type="EnsemblPlants" id="TraesPARA_EIv1.0_2682550.1">
    <property type="protein sequence ID" value="TraesPARA_EIv1.0_2682550.1.CDS1"/>
    <property type="gene ID" value="TraesPARA_EIv1.0_2682550"/>
</dbReference>
<dbReference type="EnsemblPlants" id="TraesRN1A0101085000.1">
    <property type="protein sequence ID" value="TraesRN1A0101085000.1"/>
    <property type="gene ID" value="TraesRN1A0101085000"/>
</dbReference>
<dbReference type="EnsemblPlants" id="TraesRN1A0101085100.1">
    <property type="protein sequence ID" value="TraesRN1A0101085100.1"/>
    <property type="gene ID" value="TraesRN1A0101085100"/>
</dbReference>
<dbReference type="EnsemblPlants" id="TraesRN1A0101085200.1">
    <property type="protein sequence ID" value="TraesRN1A0101085200.1"/>
    <property type="gene ID" value="TraesRN1A0101085200"/>
</dbReference>
<dbReference type="EnsemblPlants" id="TraesRN4D0100589500.1">
    <property type="protein sequence ID" value="TraesRN4D0100589500.1"/>
    <property type="gene ID" value="TraesRN4D0100589500"/>
</dbReference>
<dbReference type="EnsemblPlants" id="TraesSTA4D03G02516340.1">
    <property type="protein sequence ID" value="TraesSTA4D03G02516340.1.CDS1"/>
    <property type="gene ID" value="TraesSTA4D03G02516340"/>
</dbReference>
<dbReference type="EnsemblPlants" id="TraesSYM4D03G02549190.1">
    <property type="protein sequence ID" value="TraesSYM4D03G02549190.1.CDS1"/>
    <property type="gene ID" value="TraesSYM4D03G02549190"/>
</dbReference>
<dbReference type="EnsemblPlants" id="TraesSYM5A03G02737200.1">
    <property type="protein sequence ID" value="TraesSYM5A03G02737200.1.CDS1"/>
    <property type="gene ID" value="TraesSYM5A03G02737200"/>
</dbReference>
<dbReference type="GeneID" id="123098164"/>
<dbReference type="GeneID" id="123098534"/>
<dbReference type="GeneID" id="123098535"/>
<dbReference type="GeneID" id="123149604"/>
<dbReference type="GeneID" id="34688792"/>
<dbReference type="Gramene" id="TraesARI4D03G02560840.1">
    <property type="protein sequence ID" value="TraesARI4D03G02560840.1.CDS1"/>
    <property type="gene ID" value="TraesARI4D03G02560840"/>
</dbReference>
<dbReference type="Gramene" id="TraesCS4D02G236200.1">
    <property type="protein sequence ID" value="TraesCS4D02G236200.1.cds1"/>
    <property type="gene ID" value="TraesCS4D02G236200"/>
</dbReference>
<dbReference type="Gramene" id="TraesCS4D03G0570500.1">
    <property type="protein sequence ID" value="TraesCS4D03G0570500.1.CDS1"/>
    <property type="gene ID" value="TraesCS4D03G0570500"/>
</dbReference>
<dbReference type="Gramene" id="TraesCS7A03G1280200.1">
    <property type="protein sequence ID" value="TraesCS7A03G1280200.1.CDS1"/>
    <property type="gene ID" value="TraesCS7A03G1280200"/>
</dbReference>
<dbReference type="Gramene" id="TraesJAG4D03G02518400.1">
    <property type="protein sequence ID" value="TraesJAG4D03G02518400.1.CDS1"/>
    <property type="gene ID" value="TraesJAG4D03G02518400"/>
</dbReference>
<dbReference type="Gramene" id="TraesJAG7D03G04379980.1">
    <property type="protein sequence ID" value="TraesJAG7D03G04379980.1.CDS1"/>
    <property type="gene ID" value="TraesJAG7D03G04379980"/>
</dbReference>
<dbReference type="Gramene" id="TraesJUL6A03G03392270.1">
    <property type="protein sequence ID" value="TraesJUL6A03G03392270.1.CDS1"/>
    <property type="gene ID" value="TraesJUL6A03G03392270"/>
</dbReference>
<dbReference type="Gramene" id="TraesKAR4D01G0286050.1">
    <property type="protein sequence ID" value="cds.TraesKAR4D01G0286050.1"/>
    <property type="gene ID" value="TraesKAR4D01G0286050"/>
</dbReference>
<dbReference type="Gramene" id="TraesKAR4D01G0324850.1">
    <property type="protein sequence ID" value="cds.TraesKAR4D01G0324850.1"/>
    <property type="gene ID" value="TraesKAR4D01G0324850"/>
</dbReference>
<dbReference type="Gramene" id="TraesKAR4D01G0324860.1">
    <property type="protein sequence ID" value="cds.TraesKAR4D01G0324860.1"/>
    <property type="gene ID" value="TraesKAR4D01G0324860"/>
</dbReference>
<dbReference type="Gramene" id="TraesKARUn01G0024310.1">
    <property type="protein sequence ID" value="cds.TraesKARUn01G0024310.1"/>
    <property type="gene ID" value="TraesKARUn01G0024310"/>
</dbReference>
<dbReference type="Gramene" id="TraesKARUn01G0027450.1">
    <property type="protein sequence ID" value="cds.TraesKARUn01G0027450.1"/>
    <property type="gene ID" value="TraesKARUn01G0027450"/>
</dbReference>
<dbReference type="Gramene" id="TraesKARUn01G0099530.1">
    <property type="protein sequence ID" value="cds.TraesKARUn01G0099530.1"/>
    <property type="gene ID" value="TraesKARUn01G0099530"/>
</dbReference>
<dbReference type="Gramene" id="TraesKARUn01G0105530.1">
    <property type="protein sequence ID" value="cds.TraesKARUn01G0105530.1"/>
    <property type="gene ID" value="TraesKARUn01G0105530"/>
</dbReference>
<dbReference type="Gramene" id="TraesKARUn01G0110220.1">
    <property type="protein sequence ID" value="cds.TraesKARUn01G0110220.1"/>
    <property type="gene ID" value="TraesKARUn01G0110220"/>
</dbReference>
<dbReference type="Gramene" id="TraesKARUn01G0117090.1">
    <property type="protein sequence ID" value="cds.TraesKARUn01G0117090.1"/>
    <property type="gene ID" value="TraesKARUn01G0117090"/>
</dbReference>
<dbReference type="Gramene" id="TraesKARUn01G0122030.1">
    <property type="protein sequence ID" value="cds.TraesKARUn01G0122030.1"/>
    <property type="gene ID" value="TraesKARUn01G0122030"/>
</dbReference>
<dbReference type="Gramene" id="TraesKARUn01G0124250.1">
    <property type="protein sequence ID" value="cds.TraesKARUn01G0124250.1"/>
    <property type="gene ID" value="TraesKARUn01G0124250"/>
</dbReference>
<dbReference type="Gramene" id="TraesKARUn01G0132790.1">
    <property type="protein sequence ID" value="cds.TraesKARUn01G0132790.1"/>
    <property type="gene ID" value="TraesKARUn01G0132790"/>
</dbReference>
<dbReference type="Gramene" id="TraesKARUn01G0132980.1">
    <property type="protein sequence ID" value="cds.TraesKARUn01G0132980.1"/>
    <property type="gene ID" value="TraesKARUn01G0132980"/>
</dbReference>
<dbReference type="Gramene" id="TraesKARUn01G0137030.1">
    <property type="protein sequence ID" value="cds.TraesKARUn01G0137030.1"/>
    <property type="gene ID" value="TraesKARUn01G0137030"/>
</dbReference>
<dbReference type="Gramene" id="TraesKARUn01G0140600.1">
    <property type="protein sequence ID" value="cds.TraesKARUn01G0140600.1"/>
    <property type="gene ID" value="TraesKARUn01G0140600"/>
</dbReference>
<dbReference type="Gramene" id="TraesKARUn01G0144060.1">
    <property type="protein sequence ID" value="cds.TraesKARUn01G0144060.1"/>
    <property type="gene ID" value="TraesKARUn01G0144060"/>
</dbReference>
<dbReference type="Gramene" id="TraesKARUn01G0151410.1">
    <property type="protein sequence ID" value="cds.TraesKARUn01G0151410.1"/>
    <property type="gene ID" value="TraesKARUn01G0151410"/>
</dbReference>
<dbReference type="Gramene" id="TraesKARUn01G0152330.1">
    <property type="protein sequence ID" value="cds.TraesKARUn01G0152330.1"/>
    <property type="gene ID" value="TraesKARUn01G0152330"/>
</dbReference>
<dbReference type="Gramene" id="TraesKARUn01G0153480.1">
    <property type="protein sequence ID" value="cds.TraesKARUn01G0153480.1"/>
    <property type="gene ID" value="TraesKARUn01G0153480"/>
</dbReference>
<dbReference type="Gramene" id="TraesKARUn01G0158400.1">
    <property type="protein sequence ID" value="cds.TraesKARUn01G0158400.1"/>
    <property type="gene ID" value="TraesKARUn01G0158400"/>
</dbReference>
<dbReference type="Gramene" id="TraesLAC4D03G02474700.1">
    <property type="protein sequence ID" value="TraesLAC4D03G02474700.1.CDS1"/>
    <property type="gene ID" value="TraesLAC4D03G02474700"/>
</dbReference>
<dbReference type="Gramene" id="TraesLAC4D03G02491210.1">
    <property type="protein sequence ID" value="TraesLAC4D03G02491210.1.CDS1"/>
    <property type="gene ID" value="TraesLAC4D03G02491210"/>
</dbReference>
<dbReference type="Gramene" id="TraesLAC4D03G02491220.1">
    <property type="protein sequence ID" value="TraesLAC4D03G02491220.1.CDS1"/>
    <property type="gene ID" value="TraesLAC4D03G02491220"/>
</dbReference>
<dbReference type="Gramene" id="TraesLDM1B03G00405030.1">
    <property type="protein sequence ID" value="TraesLDM1B03G00405030.1.CDS1"/>
    <property type="gene ID" value="TraesLDM1B03G00405030"/>
</dbReference>
<dbReference type="Gramene" id="TraesLDM1B03G00405040.1">
    <property type="protein sequence ID" value="TraesLDM1B03G00405040.1.CDS1"/>
    <property type="gene ID" value="TraesLDM1B03G00405040"/>
</dbReference>
<dbReference type="Gramene" id="TraesLDM4D03G02540070.1">
    <property type="protein sequence ID" value="TraesLDM4D03G02540070.1.CDS1"/>
    <property type="gene ID" value="TraesLDM4D03G02540070"/>
</dbReference>
<dbReference type="Gramene" id="TraesLDM4D03G02540080.1">
    <property type="protein sequence ID" value="TraesLDM4D03G02540080.1.CDS1"/>
    <property type="gene ID" value="TraesLDM4D03G02540080"/>
</dbReference>
<dbReference type="Gramene" id="TraesLDM6A03G03369020.1">
    <property type="protein sequence ID" value="TraesLDM6A03G03369020.1.CDS1"/>
    <property type="gene ID" value="TraesLDM6A03G03369020"/>
</dbReference>
<dbReference type="Gramene" id="TraesMAC4D03G02535710.1">
    <property type="protein sequence ID" value="TraesMAC4D03G02535710.1.CDS1"/>
    <property type="gene ID" value="TraesMAC4D03G02535710"/>
</dbReference>
<dbReference type="Gramene" id="TraesNOR4D03G02538400.1">
    <property type="protein sequence ID" value="TraesNOR4D03G02538400.1.CDS1"/>
    <property type="gene ID" value="TraesNOR4D03G02538400"/>
</dbReference>
<dbReference type="Gramene" id="TraesNOR4D03G02554960.1">
    <property type="protein sequence ID" value="TraesNOR4D03G02554960.1.CDS1"/>
    <property type="gene ID" value="TraesNOR4D03G02554960"/>
</dbReference>
<dbReference type="Gramene" id="TraesPARA_EIv1.0_1469220.1">
    <property type="protein sequence ID" value="TraesPARA_EIv1.0_1469220.1.CDS1"/>
    <property type="gene ID" value="TraesPARA_EIv1.0_1469220"/>
</dbReference>
<dbReference type="Gramene" id="TraesPARA_EIv1.0_1478990.1">
    <property type="protein sequence ID" value="TraesPARA_EIv1.0_1478990.1.CDS1"/>
    <property type="gene ID" value="TraesPARA_EIv1.0_1478990"/>
</dbReference>
<dbReference type="Gramene" id="TraesPARA_EIv1.0_1479000.1">
    <property type="protein sequence ID" value="TraesPARA_EIv1.0_1479000.1.CDS1"/>
    <property type="gene ID" value="TraesPARA_EIv1.0_1479000"/>
</dbReference>
<dbReference type="Gramene" id="TraesPARA_EIv1.0_2673930.1">
    <property type="protein sequence ID" value="TraesPARA_EIv1.0_2673930.1.CDS1"/>
    <property type="gene ID" value="TraesPARA_EIv1.0_2673930"/>
</dbReference>
<dbReference type="Gramene" id="TraesPARA_EIv1.0_2676060.1">
    <property type="protein sequence ID" value="TraesPARA_EIv1.0_2676060.1.CDS1"/>
    <property type="gene ID" value="TraesPARA_EIv1.0_2676060"/>
</dbReference>
<dbReference type="Gramene" id="TraesPARA_EIv1.0_2678610.1">
    <property type="protein sequence ID" value="TraesPARA_EIv1.0_2678610.1.CDS1"/>
    <property type="gene ID" value="TraesPARA_EIv1.0_2678610"/>
</dbReference>
<dbReference type="Gramene" id="TraesPARA_EIv1.0_2682430.1">
    <property type="protein sequence ID" value="TraesPARA_EIv1.0_2682430.1.CDS1"/>
    <property type="gene ID" value="TraesPARA_EIv1.0_2682430"/>
</dbReference>
<dbReference type="Gramene" id="TraesPARA_EIv1.0_2682550.1">
    <property type="protein sequence ID" value="TraesPARA_EIv1.0_2682550.1.CDS1"/>
    <property type="gene ID" value="TraesPARA_EIv1.0_2682550"/>
</dbReference>
<dbReference type="Gramene" id="TraesRN1A0101085000.1">
    <property type="protein sequence ID" value="TraesRN1A0101085000.1"/>
    <property type="gene ID" value="TraesRN1A0101085000"/>
</dbReference>
<dbReference type="Gramene" id="TraesRN1A0101085100.1">
    <property type="protein sequence ID" value="TraesRN1A0101085100.1"/>
    <property type="gene ID" value="TraesRN1A0101085100"/>
</dbReference>
<dbReference type="Gramene" id="TraesRN1A0101085200.1">
    <property type="protein sequence ID" value="TraesRN1A0101085200.1"/>
    <property type="gene ID" value="TraesRN1A0101085200"/>
</dbReference>
<dbReference type="Gramene" id="TraesRN4D0100589500.1">
    <property type="protein sequence ID" value="TraesRN4D0100589500.1"/>
    <property type="gene ID" value="TraesRN4D0100589500"/>
</dbReference>
<dbReference type="Gramene" id="TraesSTA4D03G02516340.1">
    <property type="protein sequence ID" value="TraesSTA4D03G02516340.1.CDS1"/>
    <property type="gene ID" value="TraesSTA4D03G02516340"/>
</dbReference>
<dbReference type="Gramene" id="TraesSYM4D03G02549190.1">
    <property type="protein sequence ID" value="TraesSYM4D03G02549190.1.CDS1"/>
    <property type="gene ID" value="TraesSYM4D03G02549190"/>
</dbReference>
<dbReference type="Gramene" id="TraesSYM5A03G02737200.1">
    <property type="protein sequence ID" value="TraesSYM5A03G02737200.1.CDS1"/>
    <property type="gene ID" value="TraesSYM5A03G02737200"/>
</dbReference>
<dbReference type="eggNOG" id="ENOG502RFCF">
    <property type="taxonomic scope" value="Eukaryota"/>
</dbReference>
<dbReference type="HOGENOM" id="CLU_123596_0_0_1"/>
<dbReference type="OMA" id="MEWAFEN"/>
<dbReference type="OrthoDB" id="602490at2759"/>
<dbReference type="Proteomes" id="UP000019116">
    <property type="component" value="Unplaced"/>
</dbReference>
<dbReference type="GO" id="GO:0031966">
    <property type="term" value="C:mitochondrial membrane"/>
    <property type="evidence" value="ECO:0007669"/>
    <property type="project" value="UniProtKB-SubCell"/>
</dbReference>
<dbReference type="GO" id="GO:0045259">
    <property type="term" value="C:proton-transporting ATP synthase complex"/>
    <property type="evidence" value="ECO:0007669"/>
    <property type="project" value="UniProtKB-KW"/>
</dbReference>
<dbReference type="GO" id="GO:0015078">
    <property type="term" value="F:proton transmembrane transporter activity"/>
    <property type="evidence" value="ECO:0007669"/>
    <property type="project" value="InterPro"/>
</dbReference>
<dbReference type="GO" id="GO:0015986">
    <property type="term" value="P:proton motive force-driven ATP synthesis"/>
    <property type="evidence" value="ECO:0007669"/>
    <property type="project" value="InterPro"/>
</dbReference>
<dbReference type="InterPro" id="IPR008688">
    <property type="entry name" value="ATP_synth_Bsub_B/MI25"/>
</dbReference>
<dbReference type="InterPro" id="IPR044988">
    <property type="entry name" value="MI25_plants"/>
</dbReference>
<dbReference type="PANTHER" id="PTHR37774:SF4">
    <property type="entry name" value="ATP SYNTHASE PROTEIN MI25"/>
    <property type="match status" value="1"/>
</dbReference>
<dbReference type="PANTHER" id="PTHR37774">
    <property type="entry name" value="ATP SYNTHASE PROTEIN MI25-RELATED"/>
    <property type="match status" value="1"/>
</dbReference>
<dbReference type="Pfam" id="PF05405">
    <property type="entry name" value="Mt_ATP-synt_B"/>
    <property type="match status" value="1"/>
</dbReference>
<accession>P68538</accession>
<accession>P23513</accession>